<proteinExistence type="inferred from homology"/>
<evidence type="ECO:0000255" key="1">
    <source>
        <dbReference type="HAMAP-Rule" id="MF_01522"/>
    </source>
</evidence>
<reference key="1">
    <citation type="journal article" date="2009" name="Genome Res.">
        <title>Newly introduced genomic prophage islands are critical determinants of in vivo competitiveness in the Liverpool epidemic strain of Pseudomonas aeruginosa.</title>
        <authorList>
            <person name="Winstanley C."/>
            <person name="Langille M.G.I."/>
            <person name="Fothergill J.L."/>
            <person name="Kukavica-Ibrulj I."/>
            <person name="Paradis-Bleau C."/>
            <person name="Sanschagrin F."/>
            <person name="Thomson N.R."/>
            <person name="Winsor G.L."/>
            <person name="Quail M.A."/>
            <person name="Lennard N."/>
            <person name="Bignell A."/>
            <person name="Clarke L."/>
            <person name="Seeger K."/>
            <person name="Saunders D."/>
            <person name="Harris D."/>
            <person name="Parkhill J."/>
            <person name="Hancock R.E.W."/>
            <person name="Brinkman F.S.L."/>
            <person name="Levesque R.C."/>
        </authorList>
    </citation>
    <scope>NUCLEOTIDE SEQUENCE [LARGE SCALE GENOMIC DNA]</scope>
    <source>
        <strain>LESB58</strain>
    </source>
</reference>
<name>KUP_PSEA8</name>
<protein>
    <recommendedName>
        <fullName evidence="1">Probable potassium transport system protein Kup</fullName>
    </recommendedName>
</protein>
<comment type="function">
    <text evidence="1">Transport of potassium into the cell. Likely operates as a K(+):H(+) symporter.</text>
</comment>
<comment type="catalytic activity">
    <reaction evidence="1">
        <text>K(+)(in) + H(+)(in) = K(+)(out) + H(+)(out)</text>
        <dbReference type="Rhea" id="RHEA:28490"/>
        <dbReference type="ChEBI" id="CHEBI:15378"/>
        <dbReference type="ChEBI" id="CHEBI:29103"/>
    </reaction>
    <physiologicalReaction direction="right-to-left" evidence="1">
        <dbReference type="Rhea" id="RHEA:28492"/>
    </physiologicalReaction>
</comment>
<comment type="subcellular location">
    <subcellularLocation>
        <location evidence="1">Cell inner membrane</location>
        <topology evidence="1">Multi-pass membrane protein</topology>
    </subcellularLocation>
</comment>
<comment type="similarity">
    <text evidence="1">Belongs to the HAK/KUP transporter (TC 2.A.72) family.</text>
</comment>
<gene>
    <name evidence="1" type="primary">kup</name>
    <name type="ordered locus">PLES_43991</name>
</gene>
<keyword id="KW-0997">Cell inner membrane</keyword>
<keyword id="KW-1003">Cell membrane</keyword>
<keyword id="KW-0406">Ion transport</keyword>
<keyword id="KW-0472">Membrane</keyword>
<keyword id="KW-0630">Potassium</keyword>
<keyword id="KW-0633">Potassium transport</keyword>
<keyword id="KW-0769">Symport</keyword>
<keyword id="KW-0812">Transmembrane</keyword>
<keyword id="KW-1133">Transmembrane helix</keyword>
<keyword id="KW-0813">Transport</keyword>
<feature type="chain" id="PRO_1000190274" description="Probable potassium transport system protein Kup">
    <location>
        <begin position="1"/>
        <end position="634"/>
    </location>
</feature>
<feature type="transmembrane region" description="Helical" evidence="1">
    <location>
        <begin position="19"/>
        <end position="39"/>
    </location>
</feature>
<feature type="transmembrane region" description="Helical" evidence="1">
    <location>
        <begin position="62"/>
        <end position="82"/>
    </location>
</feature>
<feature type="transmembrane region" description="Helical" evidence="1">
    <location>
        <begin position="113"/>
        <end position="133"/>
    </location>
</feature>
<feature type="transmembrane region" description="Helical" evidence="1">
    <location>
        <begin position="150"/>
        <end position="170"/>
    </location>
</feature>
<feature type="transmembrane region" description="Helical" evidence="1">
    <location>
        <begin position="177"/>
        <end position="197"/>
    </location>
</feature>
<feature type="transmembrane region" description="Helical" evidence="1">
    <location>
        <begin position="225"/>
        <end position="245"/>
    </location>
</feature>
<feature type="transmembrane region" description="Helical" evidence="1">
    <location>
        <begin position="259"/>
        <end position="279"/>
    </location>
</feature>
<feature type="transmembrane region" description="Helical" evidence="1">
    <location>
        <begin position="291"/>
        <end position="311"/>
    </location>
</feature>
<feature type="transmembrane region" description="Helical" evidence="1">
    <location>
        <begin position="349"/>
        <end position="369"/>
    </location>
</feature>
<feature type="transmembrane region" description="Helical" evidence="1">
    <location>
        <begin position="379"/>
        <end position="399"/>
    </location>
</feature>
<feature type="transmembrane region" description="Helical" evidence="1">
    <location>
        <begin position="406"/>
        <end position="426"/>
    </location>
</feature>
<feature type="transmembrane region" description="Helical" evidence="1">
    <location>
        <begin position="431"/>
        <end position="451"/>
    </location>
</feature>
<accession>B7UY17</accession>
<sequence length="634" mass="68735">MSDAATRAEETSEGHSSSAIGLMVGAVGVCYGDIGTSPLYTLKEVFIGGYGVQANHDGVLGVLSLIFWSLVWVVSIKYVIFVLRADNQGEGGVMALSALARRAAAPFGRLQTFVVVAGLIGAALFYGDSMITPAISVLSAVEGLEIAFDGLEHWTVPLALIVLIGLFLIQKHGTARIGILFGPVMVLWFGALAALGVYGVIQQPEVLQAMNPVWAVRFFSSHPGIGVAILGATVLALTGAEALYADMGHFGRKPIARAWFLLVLPALVLNYFGQGATILSNAEAARNPFYLLAPGWALLPMVALSTLATVIASQAVISGAFSLTRQAIQLGYVPRMTIQHTSSHEQGQIYIGGVNWALMVGVVLLVLGFESSASLAAAYGVAVTGTMLITTLLMGVVIWRLWKWPLWLGVPFFCVMLAVDSLFFAANLPKVIQGGAFPVIAGIVIFILMSTWKRGRQLLVERLDEGSLPLSVFISSMRVQPPHRVQGTAVFLTARTDAVPHALLHNLLHNQVLHEQVVLLTVVNEDSPRVSPDRRFEVEAYGDGFFRVILHFGFMEEPDIPAALRLCHLNELDFSPMRTTYFLSRETVIPSKRIGMARWREGLFAFLLKNANGNLRYFNLPLNRVIELGTQVEI</sequence>
<organism>
    <name type="scientific">Pseudomonas aeruginosa (strain LESB58)</name>
    <dbReference type="NCBI Taxonomy" id="557722"/>
    <lineage>
        <taxon>Bacteria</taxon>
        <taxon>Pseudomonadati</taxon>
        <taxon>Pseudomonadota</taxon>
        <taxon>Gammaproteobacteria</taxon>
        <taxon>Pseudomonadales</taxon>
        <taxon>Pseudomonadaceae</taxon>
        <taxon>Pseudomonas</taxon>
    </lineage>
</organism>
<dbReference type="EMBL" id="FM209186">
    <property type="protein sequence ID" value="CAW29154.1"/>
    <property type="molecule type" value="Genomic_DNA"/>
</dbReference>
<dbReference type="RefSeq" id="WP_003104754.1">
    <property type="nucleotide sequence ID" value="NC_011770.1"/>
</dbReference>
<dbReference type="KEGG" id="pag:PLES_43991"/>
<dbReference type="HOGENOM" id="CLU_008142_4_2_6"/>
<dbReference type="GO" id="GO:0005886">
    <property type="term" value="C:plasma membrane"/>
    <property type="evidence" value="ECO:0007669"/>
    <property type="project" value="UniProtKB-SubCell"/>
</dbReference>
<dbReference type="GO" id="GO:0015079">
    <property type="term" value="F:potassium ion transmembrane transporter activity"/>
    <property type="evidence" value="ECO:0007669"/>
    <property type="project" value="UniProtKB-UniRule"/>
</dbReference>
<dbReference type="GO" id="GO:0015293">
    <property type="term" value="F:symporter activity"/>
    <property type="evidence" value="ECO:0007669"/>
    <property type="project" value="UniProtKB-UniRule"/>
</dbReference>
<dbReference type="HAMAP" id="MF_01522">
    <property type="entry name" value="Kup"/>
    <property type="match status" value="1"/>
</dbReference>
<dbReference type="InterPro" id="IPR003855">
    <property type="entry name" value="K+_transporter"/>
</dbReference>
<dbReference type="InterPro" id="IPR053952">
    <property type="entry name" value="K_trans_C"/>
</dbReference>
<dbReference type="InterPro" id="IPR053951">
    <property type="entry name" value="K_trans_N"/>
</dbReference>
<dbReference type="InterPro" id="IPR023051">
    <property type="entry name" value="Kup"/>
</dbReference>
<dbReference type="PANTHER" id="PTHR30540:SF79">
    <property type="entry name" value="LOW AFFINITY POTASSIUM TRANSPORT SYSTEM PROTEIN KUP"/>
    <property type="match status" value="1"/>
</dbReference>
<dbReference type="PANTHER" id="PTHR30540">
    <property type="entry name" value="OSMOTIC STRESS POTASSIUM TRANSPORTER"/>
    <property type="match status" value="1"/>
</dbReference>
<dbReference type="Pfam" id="PF02705">
    <property type="entry name" value="K_trans"/>
    <property type="match status" value="1"/>
</dbReference>
<dbReference type="Pfam" id="PF22776">
    <property type="entry name" value="K_trans_C"/>
    <property type="match status" value="1"/>
</dbReference>